<reference key="1">
    <citation type="journal article" date="1995" name="J. Biol. Chem.">
        <title>Cloning and molecular characterization of hxA, the gene coding for the xanthine dehydrogenase (purine hydroxylase I) of Aspergillus nidulans.</title>
        <authorList>
            <person name="Glatigny A."/>
            <person name="Scazzocchio C."/>
        </authorList>
    </citation>
    <scope>NUCLEOTIDE SEQUENCE [GENOMIC DNA]</scope>
    <scope>INDUCTION</scope>
    <source>
        <strain>biA1</strain>
    </source>
</reference>
<reference key="2">
    <citation type="journal article" date="2005" name="Nature">
        <title>Sequencing of Aspergillus nidulans and comparative analysis with A. fumigatus and A. oryzae.</title>
        <authorList>
            <person name="Galagan J.E."/>
            <person name="Calvo S.E."/>
            <person name="Cuomo C."/>
            <person name="Ma L.-J."/>
            <person name="Wortman J.R."/>
            <person name="Batzoglou S."/>
            <person name="Lee S.-I."/>
            <person name="Bastuerkmen M."/>
            <person name="Spevak C.C."/>
            <person name="Clutterbuck J."/>
            <person name="Kapitonov V."/>
            <person name="Jurka J."/>
            <person name="Scazzocchio C."/>
            <person name="Farman M.L."/>
            <person name="Butler J."/>
            <person name="Purcell S."/>
            <person name="Harris S."/>
            <person name="Braus G.H."/>
            <person name="Draht O."/>
            <person name="Busch S."/>
            <person name="D'Enfert C."/>
            <person name="Bouchier C."/>
            <person name="Goldman G.H."/>
            <person name="Bell-Pedersen D."/>
            <person name="Griffiths-Jones S."/>
            <person name="Doonan J.H."/>
            <person name="Yu J."/>
            <person name="Vienken K."/>
            <person name="Pain A."/>
            <person name="Freitag M."/>
            <person name="Selker E.U."/>
            <person name="Archer D.B."/>
            <person name="Penalva M.A."/>
            <person name="Oakley B.R."/>
            <person name="Momany M."/>
            <person name="Tanaka T."/>
            <person name="Kumagai T."/>
            <person name="Asai K."/>
            <person name="Machida M."/>
            <person name="Nierman W.C."/>
            <person name="Denning D.W."/>
            <person name="Caddick M.X."/>
            <person name="Hynes M."/>
            <person name="Paoletti M."/>
            <person name="Fischer R."/>
            <person name="Miller B.L."/>
            <person name="Dyer P.S."/>
            <person name="Sachs M.S."/>
            <person name="Osmani S.A."/>
            <person name="Birren B.W."/>
        </authorList>
    </citation>
    <scope>NUCLEOTIDE SEQUENCE [LARGE SCALE GENOMIC DNA]</scope>
    <source>
        <strain>FGSC A4 / ATCC 38163 / CBS 112.46 / NRRL 194 / M139</strain>
    </source>
</reference>
<reference key="3">
    <citation type="journal article" date="2009" name="Fungal Genet. Biol.">
        <title>The 2008 update of the Aspergillus nidulans genome annotation: a community effort.</title>
        <authorList>
            <person name="Wortman J.R."/>
            <person name="Gilsenan J.M."/>
            <person name="Joardar V."/>
            <person name="Deegan J."/>
            <person name="Clutterbuck J."/>
            <person name="Andersen M.R."/>
            <person name="Archer D."/>
            <person name="Bencina M."/>
            <person name="Braus G."/>
            <person name="Coutinho P."/>
            <person name="von Dohren H."/>
            <person name="Doonan J."/>
            <person name="Driessen A.J."/>
            <person name="Durek P."/>
            <person name="Espeso E."/>
            <person name="Fekete E."/>
            <person name="Flipphi M."/>
            <person name="Estrada C.G."/>
            <person name="Geysens S."/>
            <person name="Goldman G."/>
            <person name="de Groot P.W."/>
            <person name="Hansen K."/>
            <person name="Harris S.D."/>
            <person name="Heinekamp T."/>
            <person name="Helmstaedt K."/>
            <person name="Henrissat B."/>
            <person name="Hofmann G."/>
            <person name="Homan T."/>
            <person name="Horio T."/>
            <person name="Horiuchi H."/>
            <person name="James S."/>
            <person name="Jones M."/>
            <person name="Karaffa L."/>
            <person name="Karanyi Z."/>
            <person name="Kato M."/>
            <person name="Keller N."/>
            <person name="Kelly D.E."/>
            <person name="Kiel J.A."/>
            <person name="Kim J.M."/>
            <person name="van der Klei I.J."/>
            <person name="Klis F.M."/>
            <person name="Kovalchuk A."/>
            <person name="Krasevec N."/>
            <person name="Kubicek C.P."/>
            <person name="Liu B."/>
            <person name="Maccabe A."/>
            <person name="Meyer V."/>
            <person name="Mirabito P."/>
            <person name="Miskei M."/>
            <person name="Mos M."/>
            <person name="Mullins J."/>
            <person name="Nelson D.R."/>
            <person name="Nielsen J."/>
            <person name="Oakley B.R."/>
            <person name="Osmani S.A."/>
            <person name="Pakula T."/>
            <person name="Paszewski A."/>
            <person name="Paulsen I."/>
            <person name="Pilsyk S."/>
            <person name="Pocsi I."/>
            <person name="Punt P.J."/>
            <person name="Ram A.F."/>
            <person name="Ren Q."/>
            <person name="Robellet X."/>
            <person name="Robson G."/>
            <person name="Seiboth B."/>
            <person name="van Solingen P."/>
            <person name="Specht T."/>
            <person name="Sun J."/>
            <person name="Taheri-Talesh N."/>
            <person name="Takeshita N."/>
            <person name="Ussery D."/>
            <person name="vanKuyk P.A."/>
            <person name="Visser H."/>
            <person name="van de Vondervoort P.J."/>
            <person name="de Vries R.P."/>
            <person name="Walton J."/>
            <person name="Xiang X."/>
            <person name="Xiong Y."/>
            <person name="Zeng A.P."/>
            <person name="Brandt B.W."/>
            <person name="Cornell M.J."/>
            <person name="van den Hondel C.A."/>
            <person name="Visser J."/>
            <person name="Oliver S.G."/>
            <person name="Turner G."/>
        </authorList>
    </citation>
    <scope>GENOME REANNOTATION</scope>
    <source>
        <strain>FGSC A4 / ATCC 38163 / CBS 112.46 / NRRL 194 / M139</strain>
    </source>
</reference>
<name>XDH_EMENI</name>
<organism>
    <name type="scientific">Emericella nidulans (strain FGSC A4 / ATCC 38163 / CBS 112.46 / NRRL 194 / M139)</name>
    <name type="common">Aspergillus nidulans</name>
    <dbReference type="NCBI Taxonomy" id="227321"/>
    <lineage>
        <taxon>Eukaryota</taxon>
        <taxon>Fungi</taxon>
        <taxon>Dikarya</taxon>
        <taxon>Ascomycota</taxon>
        <taxon>Pezizomycotina</taxon>
        <taxon>Eurotiomycetes</taxon>
        <taxon>Eurotiomycetidae</taxon>
        <taxon>Eurotiales</taxon>
        <taxon>Aspergillaceae</taxon>
        <taxon>Aspergillus</taxon>
        <taxon>Aspergillus subgen. Nidulantes</taxon>
    </lineage>
</organism>
<feature type="chain" id="PRO_0000166087" description="Xanthine dehydrogenase">
    <location>
        <begin position="1"/>
        <end position="1363"/>
    </location>
</feature>
<feature type="domain" description="2Fe-2S ferredoxin-type" evidence="3">
    <location>
        <begin position="35"/>
        <end position="121"/>
    </location>
</feature>
<feature type="domain" description="FAD-binding PCMH-type" evidence="4">
    <location>
        <begin position="266"/>
        <end position="450"/>
    </location>
</feature>
<feature type="active site" description="Proton acceptor" evidence="1">
    <location>
        <position position="1295"/>
    </location>
</feature>
<feature type="binding site" evidence="2">
    <location>
        <position position="73"/>
    </location>
    <ligand>
        <name>[2Fe-2S] cluster</name>
        <dbReference type="ChEBI" id="CHEBI:190135"/>
        <label>1</label>
    </ligand>
</feature>
<feature type="binding site" evidence="2">
    <location>
        <position position="78"/>
    </location>
    <ligand>
        <name>[2Fe-2S] cluster</name>
        <dbReference type="ChEBI" id="CHEBI:190135"/>
        <label>1</label>
    </ligand>
</feature>
<feature type="binding site" evidence="2">
    <location>
        <position position="81"/>
    </location>
    <ligand>
        <name>[2Fe-2S] cluster</name>
        <dbReference type="ChEBI" id="CHEBI:190135"/>
        <label>1</label>
    </ligand>
</feature>
<feature type="binding site" evidence="2">
    <location>
        <position position="103"/>
    </location>
    <ligand>
        <name>[2Fe-2S] cluster</name>
        <dbReference type="ChEBI" id="CHEBI:190135"/>
        <label>1</label>
    </ligand>
</feature>
<feature type="binding site" evidence="2">
    <location>
        <position position="142"/>
    </location>
    <ligand>
        <name>[2Fe-2S] cluster</name>
        <dbReference type="ChEBI" id="CHEBI:190135"/>
        <label>2</label>
    </ligand>
</feature>
<feature type="binding site" evidence="2">
    <location>
        <position position="145"/>
    </location>
    <ligand>
        <name>[2Fe-2S] cluster</name>
        <dbReference type="ChEBI" id="CHEBI:190135"/>
        <label>2</label>
    </ligand>
</feature>
<feature type="binding site" evidence="2">
    <location>
        <position position="177"/>
    </location>
    <ligand>
        <name>[2Fe-2S] cluster</name>
        <dbReference type="ChEBI" id="CHEBI:190135"/>
        <label>2</label>
    </ligand>
</feature>
<feature type="binding site" evidence="2">
    <location>
        <position position="179"/>
    </location>
    <ligand>
        <name>[2Fe-2S] cluster</name>
        <dbReference type="ChEBI" id="CHEBI:190135"/>
        <label>2</label>
    </ligand>
</feature>
<feature type="binding site" evidence="1">
    <location>
        <begin position="294"/>
        <end position="301"/>
    </location>
    <ligand>
        <name>FAD</name>
        <dbReference type="ChEBI" id="CHEBI:57692"/>
    </ligand>
</feature>
<feature type="binding site" evidence="1">
    <location>
        <position position="374"/>
    </location>
    <ligand>
        <name>FAD</name>
        <dbReference type="ChEBI" id="CHEBI:57692"/>
    </ligand>
</feature>
<feature type="binding site" evidence="1">
    <location>
        <begin position="384"/>
        <end position="388"/>
    </location>
    <ligand>
        <name>FAD</name>
        <dbReference type="ChEBI" id="CHEBI:57692"/>
    </ligand>
</feature>
<feature type="binding site" evidence="1">
    <location>
        <position position="397"/>
    </location>
    <ligand>
        <name>FAD</name>
        <dbReference type="ChEBI" id="CHEBI:57692"/>
    </ligand>
</feature>
<feature type="binding site" evidence="1">
    <location>
        <position position="459"/>
    </location>
    <ligand>
        <name>FAD</name>
        <dbReference type="ChEBI" id="CHEBI:57692"/>
    </ligand>
</feature>
<feature type="binding site" evidence="1">
    <location>
        <position position="798"/>
    </location>
    <ligand>
        <name>Mo-molybdopterin</name>
        <dbReference type="ChEBI" id="CHEBI:71302"/>
    </ligand>
    <ligandPart>
        <name>Mo</name>
        <dbReference type="ChEBI" id="CHEBI:28685"/>
    </ligandPart>
</feature>
<feature type="binding site" evidence="1">
    <location>
        <position position="829"/>
    </location>
    <ligand>
        <name>Mo-molybdopterin</name>
        <dbReference type="ChEBI" id="CHEBI:71302"/>
    </ligand>
    <ligandPart>
        <name>Mo</name>
        <dbReference type="ChEBI" id="CHEBI:28685"/>
    </ligandPart>
</feature>
<feature type="binding site" evidence="1">
    <location>
        <position position="833"/>
    </location>
    <ligand>
        <name>substrate</name>
    </ligand>
</feature>
<feature type="binding site" evidence="1">
    <location>
        <position position="911"/>
    </location>
    <ligand>
        <name>substrate</name>
    </ligand>
</feature>
<feature type="binding site" evidence="1">
    <location>
        <position position="943"/>
    </location>
    <ligand>
        <name>Mo-molybdopterin</name>
        <dbReference type="ChEBI" id="CHEBI:71302"/>
    </ligand>
    <ligandPart>
        <name>Mo</name>
        <dbReference type="ChEBI" id="CHEBI:28685"/>
    </ligandPart>
</feature>
<feature type="binding site" evidence="1">
    <location>
        <position position="945"/>
    </location>
    <ligand>
        <name>substrate</name>
    </ligand>
</feature>
<feature type="binding site" evidence="1">
    <location>
        <position position="1041"/>
    </location>
    <ligand>
        <name>substrate</name>
    </ligand>
</feature>
<feature type="binding site" evidence="1">
    <location>
        <position position="1110"/>
    </location>
    <ligand>
        <name>Mo-molybdopterin</name>
        <dbReference type="ChEBI" id="CHEBI:71302"/>
    </ligand>
    <ligandPart>
        <name>Mo</name>
        <dbReference type="ChEBI" id="CHEBI:28685"/>
    </ligandPart>
</feature>
<feature type="sequence conflict" description="In Ref. 1; CAA58034." evidence="6" ref="1">
    <original>R</original>
    <variation>H</variation>
    <location>
        <position position="741"/>
    </location>
</feature>
<proteinExistence type="evidence at transcript level"/>
<accession>Q12553</accession>
<accession>C8VFY5</accession>
<accession>Q5B1G7</accession>
<protein>
    <recommendedName>
        <fullName>Xanthine dehydrogenase</fullName>
        <ecNumber>1.17.1.4</ecNumber>
    </recommendedName>
    <alternativeName>
        <fullName>Purine hydroxylase I</fullName>
    </alternativeName>
</protein>
<dbReference type="EC" id="1.17.1.4"/>
<dbReference type="EMBL" id="X82827">
    <property type="protein sequence ID" value="CAA58034.1"/>
    <property type="molecule type" value="Genomic_DNA"/>
</dbReference>
<dbReference type="EMBL" id="AACD01000098">
    <property type="protein sequence ID" value="EAA62706.1"/>
    <property type="molecule type" value="Genomic_DNA"/>
</dbReference>
<dbReference type="EMBL" id="BN001305">
    <property type="protein sequence ID" value="CBF81549.1"/>
    <property type="molecule type" value="Genomic_DNA"/>
</dbReference>
<dbReference type="PIR" id="A55875">
    <property type="entry name" value="A55875"/>
</dbReference>
<dbReference type="RefSeq" id="XP_663217.1">
    <property type="nucleotide sequence ID" value="XM_658125.2"/>
</dbReference>
<dbReference type="SMR" id="Q12553"/>
<dbReference type="STRING" id="227321.Q12553"/>
<dbReference type="EnsemblFungi" id="CBF81549">
    <property type="protein sequence ID" value="CBF81549"/>
    <property type="gene ID" value="ANIA_05613"/>
</dbReference>
<dbReference type="GeneID" id="2871900"/>
<dbReference type="KEGG" id="ani:ANIA_05613"/>
<dbReference type="VEuPathDB" id="FungiDB:AN5613"/>
<dbReference type="eggNOG" id="KOG0430">
    <property type="taxonomic scope" value="Eukaryota"/>
</dbReference>
<dbReference type="HOGENOM" id="CLU_001681_1_2_1"/>
<dbReference type="InParanoid" id="Q12553"/>
<dbReference type="OMA" id="PHPTQER"/>
<dbReference type="OrthoDB" id="8300278at2759"/>
<dbReference type="Proteomes" id="UP000000560">
    <property type="component" value="Chromosome V"/>
</dbReference>
<dbReference type="GO" id="GO:0005777">
    <property type="term" value="C:peroxisome"/>
    <property type="evidence" value="ECO:0007669"/>
    <property type="project" value="UniProtKB-SubCell"/>
</dbReference>
<dbReference type="GO" id="GO:0051537">
    <property type="term" value="F:2 iron, 2 sulfur cluster binding"/>
    <property type="evidence" value="ECO:0000250"/>
    <property type="project" value="UniProtKB"/>
</dbReference>
<dbReference type="GO" id="GO:0071949">
    <property type="term" value="F:FAD binding"/>
    <property type="evidence" value="ECO:0007669"/>
    <property type="project" value="InterPro"/>
</dbReference>
<dbReference type="GO" id="GO:0050660">
    <property type="term" value="F:flavin adenine dinucleotide binding"/>
    <property type="evidence" value="ECO:0000250"/>
    <property type="project" value="UniProtKB"/>
</dbReference>
<dbReference type="GO" id="GO:0005506">
    <property type="term" value="F:iron ion binding"/>
    <property type="evidence" value="ECO:0007669"/>
    <property type="project" value="InterPro"/>
</dbReference>
<dbReference type="GO" id="GO:0043546">
    <property type="term" value="F:molybdopterin cofactor binding"/>
    <property type="evidence" value="ECO:0000250"/>
    <property type="project" value="UniProtKB"/>
</dbReference>
<dbReference type="GO" id="GO:0016491">
    <property type="term" value="F:oxidoreductase activity"/>
    <property type="evidence" value="ECO:0000318"/>
    <property type="project" value="GO_Central"/>
</dbReference>
<dbReference type="GO" id="GO:0004854">
    <property type="term" value="F:xanthine dehydrogenase activity"/>
    <property type="evidence" value="ECO:0000314"/>
    <property type="project" value="AspGD"/>
</dbReference>
<dbReference type="GO" id="GO:0006145">
    <property type="term" value="P:purine nucleobase catabolic process"/>
    <property type="evidence" value="ECO:0000314"/>
    <property type="project" value="AspGD"/>
</dbReference>
<dbReference type="GO" id="GO:0009115">
    <property type="term" value="P:xanthine catabolic process"/>
    <property type="evidence" value="ECO:0000250"/>
    <property type="project" value="UniProtKB"/>
</dbReference>
<dbReference type="CDD" id="cd00207">
    <property type="entry name" value="fer2"/>
    <property type="match status" value="1"/>
</dbReference>
<dbReference type="FunFam" id="1.10.150.120:FF:000016">
    <property type="match status" value="1"/>
</dbReference>
<dbReference type="FunFam" id="3.10.20.30:FF:000015">
    <property type="entry name" value="Aldehyde oxidase 1"/>
    <property type="match status" value="1"/>
</dbReference>
<dbReference type="FunFam" id="3.30.365.10:FF:000003">
    <property type="entry name" value="Aldehyde oxidase 1"/>
    <property type="match status" value="1"/>
</dbReference>
<dbReference type="FunFam" id="3.90.1170.50:FF:000001">
    <property type="entry name" value="Aldehyde oxidase 1"/>
    <property type="match status" value="1"/>
</dbReference>
<dbReference type="FunFam" id="3.30.365.10:FF:000001">
    <property type="entry name" value="Xanthine dehydrogenase oxidase"/>
    <property type="match status" value="1"/>
</dbReference>
<dbReference type="FunFam" id="3.30.365.10:FF:000002">
    <property type="entry name" value="Xanthine dehydrogenase oxidase"/>
    <property type="match status" value="1"/>
</dbReference>
<dbReference type="FunFam" id="3.30.365.10:FF:000004">
    <property type="entry name" value="Xanthine dehydrogenase oxidase"/>
    <property type="match status" value="1"/>
</dbReference>
<dbReference type="FunFam" id="3.30.43.10:FF:000001">
    <property type="entry name" value="Xanthine dehydrogenase/oxidase"/>
    <property type="match status" value="1"/>
</dbReference>
<dbReference type="FunFam" id="3.30.465.10:FF:000004">
    <property type="entry name" value="Xanthine dehydrogenase/oxidase"/>
    <property type="match status" value="1"/>
</dbReference>
<dbReference type="Gene3D" id="3.10.20.30">
    <property type="match status" value="1"/>
</dbReference>
<dbReference type="Gene3D" id="3.30.465.10">
    <property type="match status" value="1"/>
</dbReference>
<dbReference type="Gene3D" id="1.10.150.120">
    <property type="entry name" value="[2Fe-2S]-binding domain"/>
    <property type="match status" value="1"/>
</dbReference>
<dbReference type="Gene3D" id="3.90.1170.50">
    <property type="entry name" value="Aldehyde oxidase/xanthine dehydrogenase, a/b hammerhead"/>
    <property type="match status" value="1"/>
</dbReference>
<dbReference type="Gene3D" id="3.30.365.10">
    <property type="entry name" value="Aldehyde oxidase/xanthine dehydrogenase, molybdopterin binding domain"/>
    <property type="match status" value="4"/>
</dbReference>
<dbReference type="Gene3D" id="3.30.390.50">
    <property type="entry name" value="CO dehydrogenase flavoprotein, C-terminal domain"/>
    <property type="match status" value="1"/>
</dbReference>
<dbReference type="Gene3D" id="3.30.43.10">
    <property type="entry name" value="Uridine Diphospho-n-acetylenolpyruvylglucosamine Reductase, domain 2"/>
    <property type="match status" value="1"/>
</dbReference>
<dbReference type="InterPro" id="IPR002888">
    <property type="entry name" value="2Fe-2S-bd"/>
</dbReference>
<dbReference type="InterPro" id="IPR036884">
    <property type="entry name" value="2Fe-2S-bd_dom_sf"/>
</dbReference>
<dbReference type="InterPro" id="IPR036010">
    <property type="entry name" value="2Fe-2S_ferredoxin-like_sf"/>
</dbReference>
<dbReference type="InterPro" id="IPR001041">
    <property type="entry name" value="2Fe-2S_ferredoxin-type"/>
</dbReference>
<dbReference type="InterPro" id="IPR006058">
    <property type="entry name" value="2Fe2S_fd_BS"/>
</dbReference>
<dbReference type="InterPro" id="IPR000674">
    <property type="entry name" value="Ald_Oxase/Xan_DH_a/b"/>
</dbReference>
<dbReference type="InterPro" id="IPR036856">
    <property type="entry name" value="Ald_Oxase/Xan_DH_a/b_sf"/>
</dbReference>
<dbReference type="InterPro" id="IPR016208">
    <property type="entry name" value="Ald_Oxase/xanthine_DH-like"/>
</dbReference>
<dbReference type="InterPro" id="IPR008274">
    <property type="entry name" value="AldOxase/xan_DH_MoCoBD1"/>
</dbReference>
<dbReference type="InterPro" id="IPR046867">
    <property type="entry name" value="AldOxase/xan_DH_MoCoBD2"/>
</dbReference>
<dbReference type="InterPro" id="IPR037165">
    <property type="entry name" value="AldOxase/xan_DH_Mopterin-bd_sf"/>
</dbReference>
<dbReference type="InterPro" id="IPR012675">
    <property type="entry name" value="Beta-grasp_dom_sf"/>
</dbReference>
<dbReference type="InterPro" id="IPR005107">
    <property type="entry name" value="CO_DH_flav_C"/>
</dbReference>
<dbReference type="InterPro" id="IPR036683">
    <property type="entry name" value="CO_DH_flav_C_dom_sf"/>
</dbReference>
<dbReference type="InterPro" id="IPR016166">
    <property type="entry name" value="FAD-bd_PCMH"/>
</dbReference>
<dbReference type="InterPro" id="IPR036318">
    <property type="entry name" value="FAD-bd_PCMH-like_sf"/>
</dbReference>
<dbReference type="InterPro" id="IPR016167">
    <property type="entry name" value="FAD-bd_PCMH_sub1"/>
</dbReference>
<dbReference type="InterPro" id="IPR016169">
    <property type="entry name" value="FAD-bd_PCMH_sub2"/>
</dbReference>
<dbReference type="InterPro" id="IPR002346">
    <property type="entry name" value="Mopterin_DH_FAD-bd"/>
</dbReference>
<dbReference type="InterPro" id="IPR014307">
    <property type="entry name" value="Xanthine_DH_ssu"/>
</dbReference>
<dbReference type="NCBIfam" id="TIGR02963">
    <property type="entry name" value="xanthine_xdhA"/>
    <property type="match status" value="1"/>
</dbReference>
<dbReference type="PANTHER" id="PTHR45444">
    <property type="entry name" value="XANTHINE DEHYDROGENASE"/>
    <property type="match status" value="1"/>
</dbReference>
<dbReference type="PANTHER" id="PTHR45444:SF3">
    <property type="entry name" value="XANTHINE DEHYDROGENASE"/>
    <property type="match status" value="1"/>
</dbReference>
<dbReference type="Pfam" id="PF01315">
    <property type="entry name" value="Ald_Xan_dh_C"/>
    <property type="match status" value="1"/>
</dbReference>
<dbReference type="Pfam" id="PF03450">
    <property type="entry name" value="CO_deh_flav_C"/>
    <property type="match status" value="1"/>
</dbReference>
<dbReference type="Pfam" id="PF00941">
    <property type="entry name" value="FAD_binding_5"/>
    <property type="match status" value="1"/>
</dbReference>
<dbReference type="Pfam" id="PF00111">
    <property type="entry name" value="Fer2"/>
    <property type="match status" value="1"/>
</dbReference>
<dbReference type="Pfam" id="PF01799">
    <property type="entry name" value="Fer2_2"/>
    <property type="match status" value="1"/>
</dbReference>
<dbReference type="Pfam" id="PF02738">
    <property type="entry name" value="MoCoBD_1"/>
    <property type="match status" value="1"/>
</dbReference>
<dbReference type="Pfam" id="PF20256">
    <property type="entry name" value="MoCoBD_2"/>
    <property type="match status" value="1"/>
</dbReference>
<dbReference type="PIRSF" id="PIRSF000127">
    <property type="entry name" value="Xanthine_DH"/>
    <property type="match status" value="1"/>
</dbReference>
<dbReference type="SMART" id="SM01008">
    <property type="entry name" value="Ald_Xan_dh_C"/>
    <property type="match status" value="1"/>
</dbReference>
<dbReference type="SMART" id="SM01092">
    <property type="entry name" value="CO_deh_flav_C"/>
    <property type="match status" value="1"/>
</dbReference>
<dbReference type="SUPFAM" id="SSF54292">
    <property type="entry name" value="2Fe-2S ferredoxin-like"/>
    <property type="match status" value="1"/>
</dbReference>
<dbReference type="SUPFAM" id="SSF55447">
    <property type="entry name" value="CO dehydrogenase flavoprotein C-terminal domain-like"/>
    <property type="match status" value="1"/>
</dbReference>
<dbReference type="SUPFAM" id="SSF47741">
    <property type="entry name" value="CO dehydrogenase ISP C-domain like"/>
    <property type="match status" value="1"/>
</dbReference>
<dbReference type="SUPFAM" id="SSF54665">
    <property type="entry name" value="CO dehydrogenase molybdoprotein N-domain-like"/>
    <property type="match status" value="1"/>
</dbReference>
<dbReference type="SUPFAM" id="SSF56176">
    <property type="entry name" value="FAD-binding/transporter-associated domain-like"/>
    <property type="match status" value="1"/>
</dbReference>
<dbReference type="SUPFAM" id="SSF56003">
    <property type="entry name" value="Molybdenum cofactor-binding domain"/>
    <property type="match status" value="1"/>
</dbReference>
<dbReference type="PROSITE" id="PS00197">
    <property type="entry name" value="2FE2S_FER_1"/>
    <property type="match status" value="1"/>
</dbReference>
<dbReference type="PROSITE" id="PS51085">
    <property type="entry name" value="2FE2S_FER_2"/>
    <property type="match status" value="1"/>
</dbReference>
<dbReference type="PROSITE" id="PS51387">
    <property type="entry name" value="FAD_PCMH"/>
    <property type="match status" value="1"/>
</dbReference>
<keyword id="KW-0001">2Fe-2S</keyword>
<keyword id="KW-0274">FAD</keyword>
<keyword id="KW-0285">Flavoprotein</keyword>
<keyword id="KW-0408">Iron</keyword>
<keyword id="KW-0411">Iron-sulfur</keyword>
<keyword id="KW-0479">Metal-binding</keyword>
<keyword id="KW-0500">Molybdenum</keyword>
<keyword id="KW-0520">NAD</keyword>
<keyword id="KW-0560">Oxidoreductase</keyword>
<keyword id="KW-0576">Peroxisome</keyword>
<keyword id="KW-1185">Reference proteome</keyword>
<gene>
    <name type="primary">hxA</name>
    <name type="ORF">AN5613</name>
</gene>
<evidence type="ECO:0000250" key="1"/>
<evidence type="ECO:0000250" key="2">
    <source>
        <dbReference type="UniProtKB" id="P22985"/>
    </source>
</evidence>
<evidence type="ECO:0000255" key="3">
    <source>
        <dbReference type="PROSITE-ProRule" id="PRU00465"/>
    </source>
</evidence>
<evidence type="ECO:0000255" key="4">
    <source>
        <dbReference type="PROSITE-ProRule" id="PRU00718"/>
    </source>
</evidence>
<evidence type="ECO:0000269" key="5">
    <source>
    </source>
</evidence>
<evidence type="ECO:0000305" key="6"/>
<sequence>MAPGVLLQPSQSELEAASPPKAAASLLQLTEEWDDTIRFYLNGTKVILDSVDPEITLLEYLRGIGLTGTKLGCAEGGCGACTVVVSQINPTTKKLYHASINACIAPLVAVDGKHVITVEGIGNVKNPHAIQQRLAIGNGSQCGFCTPGIVMSLYALLRNDPKPSEHAVEEAFDGNLCRCTGYRPILDAAQSFTSPIGCGKARANGGSGCCMEEQKGTNGCCKGSSEETTEDVKHKFASPDFIEYKPDTELIFPPSLWKHELRPLAFGNKRKKWYRPVTVQQLLEIKSIHPDAKLIGGSTETQIEIKFKQMRYGASVYLGDLAELRQFAFHDNYLEIGANISLTDLESVCDQAIERYGSARGQPFAAIKKQLRYFAGRQIRNVASPAGNLATASPISDLNPVFVATNTTLVARSLDKETEIPMTQFFRGYRSTALPPDAIISSLRIPTASEKGEYLRAYKQSKRKDDDIAIVNAALRVSLSSSNDVTSVSLVFGGMAPLTVSARNAEAFLTGKKFTDPATLEGTMGALEQDFNLKFGVPGGMATYRKSLALGFFYRFYHDVLSQIEARSSDLDNSVVAEIERAISTGEKDNEASAAYQQRVLGRAGPHLSALKQATGEAQYTDDIPAQKNELYGCMVLSTKAHAKLLSVNTEAALEIPGVIDYVDHKDLPSPRANWWGAPNCDEVFFAVDKVTTAGQPIGMILANTAKAAEEGARAVKVEYEELPVILSIEEAIEAQSFFERFRYIKNGDPESAFRDADHVFEGVSRMGGQEHFYLETQACVAIPKAEDGEMEIWSSTQNPTETQSYVAQVTGVAANKIVSRVKRLGGGFGGKETRSVQLAGICATAAAKVRRPVRCMLNRDEDIATSGQRHPFYCKWKVGVTREGKLLALDADVYANGGHTQDLSGAVVERSLSHIDNVYRFPNIYVRGRICKTNTVSNTAFRGFGGPQGLFFAESIISEVADHLDLQVEQLRILNMYEPGDMTHFNQELKDWHVPLMYDQVLQESEYFERRKAVEEYNRTHKWSKRGMAIIPTKFGISFTALFLNQAGALVHIYHDGSVLVAHGGVEMGQGLHTKMTMIAAEALGVPLSDVFISETATNTVANTSSTAASASSDLNGYAIYNACTQLNERLKPYREKMPNATLKDLAHAAYFDRVNLSAQGYYRTPDIGYTWGENKGQMFFYFTQGVTAAEVEIDTLTGDWTPLRADIKMDVGRTINPSIDYGQIEGAYIQGQGLFTTEESLWHRTTGQIFTKGPGNYKIPGFRDIPQIFNVSLLKDVEWENLRTIQRSRGVGEPPLFMGSAAFFAIRDALKAARKEWGVTDVLSLVSPATPERIRVSCADPIIERARVKAEEGEKSFFVAI</sequence>
<comment type="function">
    <text evidence="1">Key enzyme in purine degradation. Catalyzes the oxidation of hypoxanthine to xanthine. Catalyzes the oxidation of xanthine to uric acid (By similarity).</text>
</comment>
<comment type="catalytic activity">
    <reaction>
        <text>xanthine + NAD(+) + H2O = urate + NADH + H(+)</text>
        <dbReference type="Rhea" id="RHEA:16669"/>
        <dbReference type="ChEBI" id="CHEBI:15377"/>
        <dbReference type="ChEBI" id="CHEBI:15378"/>
        <dbReference type="ChEBI" id="CHEBI:17712"/>
        <dbReference type="ChEBI" id="CHEBI:17775"/>
        <dbReference type="ChEBI" id="CHEBI:57540"/>
        <dbReference type="ChEBI" id="CHEBI:57945"/>
        <dbReference type="EC" id="1.17.1.4"/>
    </reaction>
</comment>
<comment type="catalytic activity">
    <reaction>
        <text>hypoxanthine + NAD(+) + H2O = xanthine + NADH + H(+)</text>
        <dbReference type="Rhea" id="RHEA:24670"/>
        <dbReference type="ChEBI" id="CHEBI:15377"/>
        <dbReference type="ChEBI" id="CHEBI:15378"/>
        <dbReference type="ChEBI" id="CHEBI:17368"/>
        <dbReference type="ChEBI" id="CHEBI:17712"/>
        <dbReference type="ChEBI" id="CHEBI:57540"/>
        <dbReference type="ChEBI" id="CHEBI:57945"/>
        <dbReference type="EC" id="1.17.1.4"/>
    </reaction>
</comment>
<comment type="cofactor">
    <cofactor evidence="1">
        <name>FAD</name>
        <dbReference type="ChEBI" id="CHEBI:57692"/>
    </cofactor>
</comment>
<comment type="cofactor">
    <cofactor evidence="1">
        <name>Mo-molybdopterin</name>
        <dbReference type="ChEBI" id="CHEBI:71302"/>
    </cofactor>
    <text evidence="1">Binds 1 Mo-molybdopterin (Mo-MPT) cofactor per subunit.</text>
</comment>
<comment type="cofactor">
    <cofactor evidence="2">
        <name>[2Fe-2S] cluster</name>
        <dbReference type="ChEBI" id="CHEBI:190135"/>
    </cofactor>
    <text evidence="2">Binds 2 [2Fe-2S] clusters per subunit.</text>
</comment>
<comment type="subcellular location">
    <subcellularLocation>
        <location evidence="1">Peroxisome</location>
    </subcellularLocation>
</comment>
<comment type="induction">
    <text evidence="5">By 2-thiouric acid. Repressed by ammonium.</text>
</comment>
<comment type="similarity">
    <text evidence="6">Belongs to the xanthine dehydrogenase family.</text>
</comment>